<accession>Q5RBL6</accession>
<organism>
    <name type="scientific">Pongo abelii</name>
    <name type="common">Sumatran orangutan</name>
    <name type="synonym">Pongo pygmaeus abelii</name>
    <dbReference type="NCBI Taxonomy" id="9601"/>
    <lineage>
        <taxon>Eukaryota</taxon>
        <taxon>Metazoa</taxon>
        <taxon>Chordata</taxon>
        <taxon>Craniata</taxon>
        <taxon>Vertebrata</taxon>
        <taxon>Euteleostomi</taxon>
        <taxon>Mammalia</taxon>
        <taxon>Eutheria</taxon>
        <taxon>Euarchontoglires</taxon>
        <taxon>Primates</taxon>
        <taxon>Haplorrhini</taxon>
        <taxon>Catarrhini</taxon>
        <taxon>Hominidae</taxon>
        <taxon>Pongo</taxon>
    </lineage>
</organism>
<comment type="function">
    <text evidence="1">Involved in transport from the ER to the Golgi apparatus as well as in intra-Golgi transport. It belongs to a super-family of proteins called t-SNAREs or soluble NSF (N-ethylmaleimide-sensitive factor) attachment protein receptor. May play a protective role against hydrogen peroxide induced cytotoxicity under glutathione depleted conditions in neuronal cells by regulating the intracellular ROS levels via inhibition of p38 MAPK (MAPK11, MAPK12, MAPK13 and MAPK14). Participates in docking and fusion stage of ER to cis-Golgi transport. Plays an important physiological role in VLDL-transport vesicle-Golgi fusion and thus in VLDL delivery to the hepatic cis-Golgi (By similarity).</text>
</comment>
<comment type="subunit">
    <text evidence="1">Component of several multiprotein Golgi SNARE complexes. Identified in a SNARE complex with BET1, STX5 and YKT6, in a SNARE complex with BET1L, STX5 and YKT6, in a SNARE complex with STX5, GOSR2, SEC22B and BET1, and in complex with STX5 and COG3. Interacts with GABARAPL2 (By similarity).</text>
</comment>
<comment type="subcellular location">
    <subcellularLocation>
        <location evidence="1">Golgi apparatus membrane</location>
        <topology evidence="1">Single-pass type IV membrane protein</topology>
    </subcellularLocation>
    <text evidence="1">Localizes throughout the Golgi apparatus, with lowest levels in the trans-Golgi network. Enriched on vesicular components at the terminal rims of the Golgi.</text>
</comment>
<comment type="similarity">
    <text evidence="5">Belongs to the GOSR1 family.</text>
</comment>
<keyword id="KW-0007">Acetylation</keyword>
<keyword id="KW-0175">Coiled coil</keyword>
<keyword id="KW-0931">ER-Golgi transport</keyword>
<keyword id="KW-0333">Golgi apparatus</keyword>
<keyword id="KW-0472">Membrane</keyword>
<keyword id="KW-0597">Phosphoprotein</keyword>
<keyword id="KW-0653">Protein transport</keyword>
<keyword id="KW-1185">Reference proteome</keyword>
<keyword id="KW-0812">Transmembrane</keyword>
<keyword id="KW-1133">Transmembrane helix</keyword>
<keyword id="KW-0813">Transport</keyword>
<proteinExistence type="evidence at transcript level"/>
<feature type="initiator methionine" description="Removed" evidence="2">
    <location>
        <position position="1"/>
    </location>
</feature>
<feature type="chain" id="PRO_0000212544" description="Golgi SNAP receptor complex member 1">
    <location>
        <begin position="2"/>
        <end position="248"/>
    </location>
</feature>
<feature type="topological domain" description="Cytoplasmic" evidence="3">
    <location>
        <begin position="2"/>
        <end position="227"/>
    </location>
</feature>
<feature type="transmembrane region" description="Helical; Anchor for type IV membrane protein" evidence="3">
    <location>
        <begin position="228"/>
        <end position="248"/>
    </location>
</feature>
<feature type="region of interest" description="Disordered" evidence="4">
    <location>
        <begin position="37"/>
        <end position="60"/>
    </location>
</feature>
<feature type="coiled-coil region" evidence="3">
    <location>
        <begin position="10"/>
        <end position="30"/>
    </location>
</feature>
<feature type="coiled-coil region" evidence="3">
    <location>
        <begin position="68"/>
        <end position="92"/>
    </location>
</feature>
<feature type="compositionally biased region" description="Basic and acidic residues" evidence="4">
    <location>
        <begin position="41"/>
        <end position="50"/>
    </location>
</feature>
<feature type="modified residue" description="N-acetylalanine" evidence="2">
    <location>
        <position position="2"/>
    </location>
</feature>
<feature type="modified residue" description="Phosphoserine" evidence="2">
    <location>
        <position position="139"/>
    </location>
</feature>
<gene>
    <name type="primary">GOSR1</name>
</gene>
<reference key="1">
    <citation type="submission" date="2004-11" db="EMBL/GenBank/DDBJ databases">
        <authorList>
            <consortium name="The German cDNA consortium"/>
        </authorList>
    </citation>
    <scope>NUCLEOTIDE SEQUENCE [LARGE SCALE MRNA]</scope>
    <source>
        <tissue>Brain cortex</tissue>
    </source>
</reference>
<dbReference type="EMBL" id="CR858622">
    <property type="protein sequence ID" value="CAH90844.1"/>
    <property type="molecule type" value="mRNA"/>
</dbReference>
<dbReference type="RefSeq" id="NP_001125481.1">
    <property type="nucleotide sequence ID" value="NM_001132009.1"/>
</dbReference>
<dbReference type="RefSeq" id="XP_054391127.1">
    <property type="nucleotide sequence ID" value="XM_054535152.2"/>
</dbReference>
<dbReference type="SMR" id="Q5RBL6"/>
<dbReference type="FunCoup" id="Q5RBL6">
    <property type="interactions" value="3616"/>
</dbReference>
<dbReference type="STRING" id="9601.ENSPPYP00000009145"/>
<dbReference type="GeneID" id="100172390"/>
<dbReference type="KEGG" id="pon:100172390"/>
<dbReference type="CTD" id="9527"/>
<dbReference type="eggNOG" id="KOG3208">
    <property type="taxonomic scope" value="Eukaryota"/>
</dbReference>
<dbReference type="HOGENOM" id="CLU_078034_0_1_1"/>
<dbReference type="InParanoid" id="Q5RBL6"/>
<dbReference type="OrthoDB" id="422156at2759"/>
<dbReference type="TreeFam" id="TF105782"/>
<dbReference type="Proteomes" id="UP000001595">
    <property type="component" value="Chromosome 17"/>
</dbReference>
<dbReference type="GO" id="GO:0005801">
    <property type="term" value="C:cis-Golgi network"/>
    <property type="evidence" value="ECO:0007669"/>
    <property type="project" value="InterPro"/>
</dbReference>
<dbReference type="GO" id="GO:0005797">
    <property type="term" value="C:Golgi medial cisterna"/>
    <property type="evidence" value="ECO:0007669"/>
    <property type="project" value="TreeGrafter"/>
</dbReference>
<dbReference type="GO" id="GO:0000139">
    <property type="term" value="C:Golgi membrane"/>
    <property type="evidence" value="ECO:0007669"/>
    <property type="project" value="UniProtKB-SubCell"/>
</dbReference>
<dbReference type="GO" id="GO:0031201">
    <property type="term" value="C:SNARE complex"/>
    <property type="evidence" value="ECO:0007669"/>
    <property type="project" value="TreeGrafter"/>
</dbReference>
<dbReference type="GO" id="GO:0005484">
    <property type="term" value="F:SNAP receptor activity"/>
    <property type="evidence" value="ECO:0007669"/>
    <property type="project" value="TreeGrafter"/>
</dbReference>
<dbReference type="GO" id="GO:0006888">
    <property type="term" value="P:endoplasmic reticulum to Golgi vesicle-mediated transport"/>
    <property type="evidence" value="ECO:0007669"/>
    <property type="project" value="InterPro"/>
</dbReference>
<dbReference type="GO" id="GO:0048219">
    <property type="term" value="P:inter-Golgi cisterna vesicle-mediated transport"/>
    <property type="evidence" value="ECO:0007669"/>
    <property type="project" value="TreeGrafter"/>
</dbReference>
<dbReference type="GO" id="GO:0015031">
    <property type="term" value="P:protein transport"/>
    <property type="evidence" value="ECO:0007669"/>
    <property type="project" value="UniProtKB-KW"/>
</dbReference>
<dbReference type="GO" id="GO:0006906">
    <property type="term" value="P:vesicle fusion"/>
    <property type="evidence" value="ECO:0007669"/>
    <property type="project" value="TreeGrafter"/>
</dbReference>
<dbReference type="CDD" id="cd15864">
    <property type="entry name" value="SNARE_GS28"/>
    <property type="match status" value="1"/>
</dbReference>
<dbReference type="InterPro" id="IPR023601">
    <property type="entry name" value="Golgi_SNAP_su1"/>
</dbReference>
<dbReference type="PANTHER" id="PTHR21094:SF2">
    <property type="entry name" value="GOLGI SNAP RECEPTOR COMPLEX MEMBER 1"/>
    <property type="match status" value="1"/>
</dbReference>
<dbReference type="PANTHER" id="PTHR21094">
    <property type="entry name" value="GOS-28 SNARE- RELATED"/>
    <property type="match status" value="1"/>
</dbReference>
<dbReference type="Pfam" id="PF12352">
    <property type="entry name" value="V-SNARE_C"/>
    <property type="match status" value="1"/>
</dbReference>
<dbReference type="PIRSF" id="PIRSF027109">
    <property type="entry name" value="Golgi_SNARE"/>
    <property type="match status" value="1"/>
</dbReference>
<sequence>MAAGTSNYWEDLRKQARQLENELDLKLVSFSKLCTSYSHSSTRDGRRDSSDTTPLLNGSSQDRMFETMAIEIEQLLARLTGVNDKMAEYTNSAGVPSLNAALMHTLQRHRDILQDYTHEFHKTKANFMSIRERENLMGSVRKDIESYKSGSGVNNRRTELFLKEHDHLRNSDRLIEETISIAMATKENMTSQRGMLKSIHSKMNTLANRFPAVNSLIQRINLRKRRDSLILGGVIGICTILLLLYAFH</sequence>
<evidence type="ECO:0000250" key="1"/>
<evidence type="ECO:0000250" key="2">
    <source>
        <dbReference type="UniProtKB" id="O95249"/>
    </source>
</evidence>
<evidence type="ECO:0000255" key="3"/>
<evidence type="ECO:0000256" key="4">
    <source>
        <dbReference type="SAM" id="MobiDB-lite"/>
    </source>
</evidence>
<evidence type="ECO:0000305" key="5"/>
<protein>
    <recommendedName>
        <fullName>Golgi SNAP receptor complex member 1</fullName>
    </recommendedName>
    <alternativeName>
        <fullName>28 kDa Golgi SNARE protein</fullName>
    </alternativeName>
    <alternativeName>
        <fullName>28 kDa cis-Golgi SNARE p28</fullName>
    </alternativeName>
</protein>
<name>GOSR1_PONAB</name>